<gene>
    <name type="ORF">DDB_G0289697</name>
</gene>
<evidence type="ECO:0000250" key="1"/>
<evidence type="ECO:0000255" key="2"/>
<evidence type="ECO:0000255" key="3">
    <source>
        <dbReference type="PROSITE-ProRule" id="PRU00718"/>
    </source>
</evidence>
<evidence type="ECO:0000269" key="4">
    <source>
    </source>
</evidence>
<evidence type="ECO:0000305" key="5"/>
<organism>
    <name type="scientific">Dictyostelium discoideum</name>
    <name type="common">Social amoeba</name>
    <dbReference type="NCBI Taxonomy" id="44689"/>
    <lineage>
        <taxon>Eukaryota</taxon>
        <taxon>Amoebozoa</taxon>
        <taxon>Evosea</taxon>
        <taxon>Eumycetozoa</taxon>
        <taxon>Dictyostelia</taxon>
        <taxon>Dictyosteliales</taxon>
        <taxon>Dictyosteliaceae</taxon>
        <taxon>Dictyostelium</taxon>
    </lineage>
</organism>
<accession>Q54H55</accession>
<feature type="chain" id="PRO_0000388257" description="FAD-linked oxidoreductase DDB_G0289697">
    <location>
        <begin position="1"/>
        <end position="452"/>
    </location>
</feature>
<feature type="domain" description="FAD-binding PCMH-type" evidence="3">
    <location>
        <begin position="44"/>
        <end position="212"/>
    </location>
</feature>
<feature type="modified residue" description="Pros-8alpha-FAD histidine" evidence="2">
    <location>
        <position position="81"/>
    </location>
</feature>
<reference key="1">
    <citation type="journal article" date="2005" name="Nature">
        <title>The genome of the social amoeba Dictyostelium discoideum.</title>
        <authorList>
            <person name="Eichinger L."/>
            <person name="Pachebat J.A."/>
            <person name="Gloeckner G."/>
            <person name="Rajandream M.A."/>
            <person name="Sucgang R."/>
            <person name="Berriman M."/>
            <person name="Song J."/>
            <person name="Olsen R."/>
            <person name="Szafranski K."/>
            <person name="Xu Q."/>
            <person name="Tunggal B."/>
            <person name="Kummerfeld S."/>
            <person name="Madera M."/>
            <person name="Konfortov B.A."/>
            <person name="Rivero F."/>
            <person name="Bankier A.T."/>
            <person name="Lehmann R."/>
            <person name="Hamlin N."/>
            <person name="Davies R."/>
            <person name="Gaudet P."/>
            <person name="Fey P."/>
            <person name="Pilcher K."/>
            <person name="Chen G."/>
            <person name="Saunders D."/>
            <person name="Sodergren E.J."/>
            <person name="Davis P."/>
            <person name="Kerhornou A."/>
            <person name="Nie X."/>
            <person name="Hall N."/>
            <person name="Anjard C."/>
            <person name="Hemphill L."/>
            <person name="Bason N."/>
            <person name="Farbrother P."/>
            <person name="Desany B."/>
            <person name="Just E."/>
            <person name="Morio T."/>
            <person name="Rost R."/>
            <person name="Churcher C.M."/>
            <person name="Cooper J."/>
            <person name="Haydock S."/>
            <person name="van Driessche N."/>
            <person name="Cronin A."/>
            <person name="Goodhead I."/>
            <person name="Muzny D.M."/>
            <person name="Mourier T."/>
            <person name="Pain A."/>
            <person name="Lu M."/>
            <person name="Harper D."/>
            <person name="Lindsay R."/>
            <person name="Hauser H."/>
            <person name="James K.D."/>
            <person name="Quiles M."/>
            <person name="Madan Babu M."/>
            <person name="Saito T."/>
            <person name="Buchrieser C."/>
            <person name="Wardroper A."/>
            <person name="Felder M."/>
            <person name="Thangavelu M."/>
            <person name="Johnson D."/>
            <person name="Knights A."/>
            <person name="Loulseged H."/>
            <person name="Mungall K.L."/>
            <person name="Oliver K."/>
            <person name="Price C."/>
            <person name="Quail M.A."/>
            <person name="Urushihara H."/>
            <person name="Hernandez J."/>
            <person name="Rabbinowitsch E."/>
            <person name="Steffen D."/>
            <person name="Sanders M."/>
            <person name="Ma J."/>
            <person name="Kohara Y."/>
            <person name="Sharp S."/>
            <person name="Simmonds M.N."/>
            <person name="Spiegler S."/>
            <person name="Tivey A."/>
            <person name="Sugano S."/>
            <person name="White B."/>
            <person name="Walker D."/>
            <person name="Woodward J.R."/>
            <person name="Winckler T."/>
            <person name="Tanaka Y."/>
            <person name="Shaulsky G."/>
            <person name="Schleicher M."/>
            <person name="Weinstock G.M."/>
            <person name="Rosenthal A."/>
            <person name="Cox E.C."/>
            <person name="Chisholm R.L."/>
            <person name="Gibbs R.A."/>
            <person name="Loomis W.F."/>
            <person name="Platzer M."/>
            <person name="Kay R.R."/>
            <person name="Williams J.G."/>
            <person name="Dear P.H."/>
            <person name="Noegel A.A."/>
            <person name="Barrell B.G."/>
            <person name="Kuspa A."/>
        </authorList>
    </citation>
    <scope>NUCLEOTIDE SEQUENCE [LARGE SCALE GENOMIC DNA]</scope>
    <source>
        <strain>AX4</strain>
    </source>
</reference>
<reference key="2">
    <citation type="journal article" date="2008" name="BMC Microbiol.">
        <title>Dictyostelium transcriptional responses to Pseudomonas aeruginosa: common and specific effects from PAO1 and PA14 strains.</title>
        <authorList>
            <person name="Carilla-Latorre S."/>
            <person name="Calvo-Garrido J."/>
            <person name="Bloomfield G."/>
            <person name="Skelton J."/>
            <person name="Kay R.R."/>
            <person name="Ivens A."/>
            <person name="Martinez J.L."/>
            <person name="Escalante R."/>
        </authorList>
    </citation>
    <scope>INDUCTION [LARGE SCALE ANALYSIS]</scope>
</reference>
<dbReference type="EC" id="1.-.-.-"/>
<dbReference type="EMBL" id="AAFI02000148">
    <property type="protein sequence ID" value="EAL62560.1"/>
    <property type="molecule type" value="Genomic_DNA"/>
</dbReference>
<dbReference type="RefSeq" id="XP_636063.1">
    <property type="nucleotide sequence ID" value="XM_630971.1"/>
</dbReference>
<dbReference type="SMR" id="Q54H55"/>
<dbReference type="FunCoup" id="Q54H55">
    <property type="interactions" value="2"/>
</dbReference>
<dbReference type="STRING" id="44689.Q54H55"/>
<dbReference type="PaxDb" id="44689-DDB0302476"/>
<dbReference type="EnsemblProtists" id="EAL62560">
    <property type="protein sequence ID" value="EAL62560"/>
    <property type="gene ID" value="DDB_G0289697"/>
</dbReference>
<dbReference type="GeneID" id="8627273"/>
<dbReference type="KEGG" id="ddi:DDB_G0289697"/>
<dbReference type="dictyBase" id="DDB_G0289697"/>
<dbReference type="VEuPathDB" id="AmoebaDB:DDB_G0289697"/>
<dbReference type="eggNOG" id="ENOG502S2FH">
    <property type="taxonomic scope" value="Eukaryota"/>
</dbReference>
<dbReference type="HOGENOM" id="CLU_018354_10_0_1"/>
<dbReference type="InParanoid" id="Q54H55"/>
<dbReference type="OMA" id="RSSHFVM"/>
<dbReference type="PhylomeDB" id="Q54H55"/>
<dbReference type="PRO" id="PR:Q54H55"/>
<dbReference type="Proteomes" id="UP000002195">
    <property type="component" value="Chromosome 5"/>
</dbReference>
<dbReference type="GO" id="GO:0071949">
    <property type="term" value="F:FAD binding"/>
    <property type="evidence" value="ECO:0007669"/>
    <property type="project" value="InterPro"/>
</dbReference>
<dbReference type="GO" id="GO:0016491">
    <property type="term" value="F:oxidoreductase activity"/>
    <property type="evidence" value="ECO:0007669"/>
    <property type="project" value="UniProtKB-KW"/>
</dbReference>
<dbReference type="Gene3D" id="3.30.465.10">
    <property type="match status" value="1"/>
</dbReference>
<dbReference type="Gene3D" id="3.40.462.20">
    <property type="match status" value="1"/>
</dbReference>
<dbReference type="Gene3D" id="3.30.43.10">
    <property type="entry name" value="Uridine Diphospho-n-acetylenolpyruvylglucosamine Reductase, domain 2"/>
    <property type="match status" value="1"/>
</dbReference>
<dbReference type="InterPro" id="IPR012951">
    <property type="entry name" value="BBE"/>
</dbReference>
<dbReference type="InterPro" id="IPR016166">
    <property type="entry name" value="FAD-bd_PCMH"/>
</dbReference>
<dbReference type="InterPro" id="IPR036318">
    <property type="entry name" value="FAD-bd_PCMH-like_sf"/>
</dbReference>
<dbReference type="InterPro" id="IPR016167">
    <property type="entry name" value="FAD-bd_PCMH_sub1"/>
</dbReference>
<dbReference type="InterPro" id="IPR016169">
    <property type="entry name" value="FAD-bd_PCMH_sub2"/>
</dbReference>
<dbReference type="InterPro" id="IPR050416">
    <property type="entry name" value="FAD-linked_Oxidoreductase"/>
</dbReference>
<dbReference type="InterPro" id="IPR006094">
    <property type="entry name" value="Oxid_FAD_bind_N"/>
</dbReference>
<dbReference type="PANTHER" id="PTHR42973">
    <property type="entry name" value="BINDING OXIDOREDUCTASE, PUTATIVE (AFU_ORTHOLOGUE AFUA_1G17690)-RELATED"/>
    <property type="match status" value="1"/>
</dbReference>
<dbReference type="PANTHER" id="PTHR42973:SF14">
    <property type="entry name" value="FAD-BINDING PCMH-TYPE DOMAIN-CONTAINING PROTEIN-RELATED"/>
    <property type="match status" value="1"/>
</dbReference>
<dbReference type="Pfam" id="PF08031">
    <property type="entry name" value="BBE"/>
    <property type="match status" value="1"/>
</dbReference>
<dbReference type="Pfam" id="PF01565">
    <property type="entry name" value="FAD_binding_4"/>
    <property type="match status" value="1"/>
</dbReference>
<dbReference type="SUPFAM" id="SSF56176">
    <property type="entry name" value="FAD-binding/transporter-associated domain-like"/>
    <property type="match status" value="1"/>
</dbReference>
<dbReference type="PROSITE" id="PS51387">
    <property type="entry name" value="FAD_PCMH"/>
    <property type="match status" value="1"/>
</dbReference>
<proteinExistence type="evidence at transcript level"/>
<sequence>MESNQKCGATQIVNEFCESIEGIVFRKGSEEYKQNVNKRWNIDVVNTPLLIVYPKNIQDVVKAVNFSRECQLDFAVIAGAHGFKSTCDNGLLLNISSMKNIKVDEASKTVVVETGCTLGDLDKETSKFGLGIPSGHVSHTGLGGLTLGGGIGHLSRSLGLTSDNLIGCTLVNYKGEIEKVTDQSNKELIYAIRGAGSNFGVITDFTFKLHPVKDVYLGTFVYPHATSKEPLTLLGEYASSKDVPNELSCAISITPEGVVVMAIYNGTEEQGKPYIEKIASFGVPVVSKISMIPYVQLQCLIDNKVPHGLKYYQRGPFIKEALNADMIEIILDAYNKHPTKSCAILLTHLGGKVREPVEDDFSSFAHRNSEYQIIFASIIPSDQDKPSIKQWTADVHTKLMPYCFGDYSNTTDGTQPIEIIYGKHTNKLIQLKTKYDPLNFFKNNTNIKPIQN</sequence>
<name>Y8969_DICDI</name>
<comment type="cofactor">
    <cofactor evidence="1">
        <name>FAD</name>
        <dbReference type="ChEBI" id="CHEBI:57692"/>
    </cofactor>
</comment>
<comment type="induction">
    <text evidence="4">Down-regulated by Pseudomonas aeruginosa, PAO1 strain and PA14 strain infection.</text>
</comment>
<comment type="similarity">
    <text evidence="5">Belongs to the oxygen-dependent FAD-linked oxidoreductase family.</text>
</comment>
<keyword id="KW-0274">FAD</keyword>
<keyword id="KW-0285">Flavoprotein</keyword>
<keyword id="KW-0560">Oxidoreductase</keyword>
<keyword id="KW-1185">Reference proteome</keyword>
<protein>
    <recommendedName>
        <fullName>FAD-linked oxidoreductase DDB_G0289697</fullName>
        <ecNumber>1.-.-.-</ecNumber>
    </recommendedName>
</protein>